<protein>
    <recommendedName>
        <fullName evidence="1">Small ribosomal subunit protein uS11</fullName>
    </recommendedName>
    <alternativeName>
        <fullName evidence="2">30S ribosomal protein S11</fullName>
    </alternativeName>
</protein>
<feature type="chain" id="PRO_0000294774" description="Small ribosomal subunit protein uS11">
    <location>
        <begin position="1"/>
        <end position="129"/>
    </location>
</feature>
<comment type="function">
    <text evidence="1">Located on the platform of the 30S subunit, it bridges several disparate RNA helices of the 16S rRNA. Forms part of the Shine-Dalgarno cleft in the 70S ribosome.</text>
</comment>
<comment type="subunit">
    <text evidence="1">Part of the 30S ribosomal subunit. Interacts with proteins S7 and S18. Binds to IF-3.</text>
</comment>
<comment type="similarity">
    <text evidence="1">Belongs to the universal ribosomal protein uS11 family.</text>
</comment>
<keyword id="KW-1185">Reference proteome</keyword>
<keyword id="KW-0687">Ribonucleoprotein</keyword>
<keyword id="KW-0689">Ribosomal protein</keyword>
<keyword id="KW-0694">RNA-binding</keyword>
<keyword id="KW-0699">rRNA-binding</keyword>
<dbReference type="EMBL" id="CP000423">
    <property type="protein sequence ID" value="ABJ71214.1"/>
    <property type="molecule type" value="Genomic_DNA"/>
</dbReference>
<dbReference type="RefSeq" id="WP_003567514.1">
    <property type="nucleotide sequence ID" value="NC_008526.1"/>
</dbReference>
<dbReference type="RefSeq" id="YP_807656.1">
    <property type="nucleotide sequence ID" value="NC_008526.1"/>
</dbReference>
<dbReference type="SMR" id="Q035A8"/>
<dbReference type="STRING" id="321967.LSEI_2478"/>
<dbReference type="PaxDb" id="321967-LSEI_2478"/>
<dbReference type="GeneID" id="93270064"/>
<dbReference type="KEGG" id="lca:LSEI_2478"/>
<dbReference type="PATRIC" id="fig|321967.11.peg.2432"/>
<dbReference type="HOGENOM" id="CLU_072439_5_0_9"/>
<dbReference type="PRO" id="PR:Q035A8"/>
<dbReference type="Proteomes" id="UP000001651">
    <property type="component" value="Chromosome"/>
</dbReference>
<dbReference type="GO" id="GO:1990904">
    <property type="term" value="C:ribonucleoprotein complex"/>
    <property type="evidence" value="ECO:0007669"/>
    <property type="project" value="UniProtKB-KW"/>
</dbReference>
<dbReference type="GO" id="GO:0005840">
    <property type="term" value="C:ribosome"/>
    <property type="evidence" value="ECO:0007669"/>
    <property type="project" value="UniProtKB-KW"/>
</dbReference>
<dbReference type="GO" id="GO:0019843">
    <property type="term" value="F:rRNA binding"/>
    <property type="evidence" value="ECO:0007669"/>
    <property type="project" value="UniProtKB-UniRule"/>
</dbReference>
<dbReference type="GO" id="GO:0003735">
    <property type="term" value="F:structural constituent of ribosome"/>
    <property type="evidence" value="ECO:0007669"/>
    <property type="project" value="InterPro"/>
</dbReference>
<dbReference type="GO" id="GO:0006412">
    <property type="term" value="P:translation"/>
    <property type="evidence" value="ECO:0007669"/>
    <property type="project" value="UniProtKB-UniRule"/>
</dbReference>
<dbReference type="FunFam" id="3.30.420.80:FF:000001">
    <property type="entry name" value="30S ribosomal protein S11"/>
    <property type="match status" value="1"/>
</dbReference>
<dbReference type="Gene3D" id="3.30.420.80">
    <property type="entry name" value="Ribosomal protein S11"/>
    <property type="match status" value="1"/>
</dbReference>
<dbReference type="HAMAP" id="MF_01310">
    <property type="entry name" value="Ribosomal_uS11"/>
    <property type="match status" value="1"/>
</dbReference>
<dbReference type="InterPro" id="IPR001971">
    <property type="entry name" value="Ribosomal_uS11"/>
</dbReference>
<dbReference type="InterPro" id="IPR019981">
    <property type="entry name" value="Ribosomal_uS11_bac-type"/>
</dbReference>
<dbReference type="InterPro" id="IPR018102">
    <property type="entry name" value="Ribosomal_uS11_CS"/>
</dbReference>
<dbReference type="InterPro" id="IPR036967">
    <property type="entry name" value="Ribosomal_uS11_sf"/>
</dbReference>
<dbReference type="NCBIfam" id="NF003698">
    <property type="entry name" value="PRK05309.1"/>
    <property type="match status" value="1"/>
</dbReference>
<dbReference type="NCBIfam" id="TIGR03632">
    <property type="entry name" value="uS11_bact"/>
    <property type="match status" value="1"/>
</dbReference>
<dbReference type="PANTHER" id="PTHR11759">
    <property type="entry name" value="40S RIBOSOMAL PROTEIN S14/30S RIBOSOMAL PROTEIN S11"/>
    <property type="match status" value="1"/>
</dbReference>
<dbReference type="Pfam" id="PF00411">
    <property type="entry name" value="Ribosomal_S11"/>
    <property type="match status" value="1"/>
</dbReference>
<dbReference type="PIRSF" id="PIRSF002131">
    <property type="entry name" value="Ribosomal_S11"/>
    <property type="match status" value="1"/>
</dbReference>
<dbReference type="SUPFAM" id="SSF53137">
    <property type="entry name" value="Translational machinery components"/>
    <property type="match status" value="1"/>
</dbReference>
<dbReference type="PROSITE" id="PS00054">
    <property type="entry name" value="RIBOSOMAL_S11"/>
    <property type="match status" value="1"/>
</dbReference>
<accession>Q035A8</accession>
<organism>
    <name type="scientific">Lacticaseibacillus paracasei (strain ATCC 334 / BCRC 17002 / CCUG 31169 / CIP 107868 / KCTC 3260 / NRRL B-441)</name>
    <name type="common">Lactobacillus paracasei</name>
    <dbReference type="NCBI Taxonomy" id="321967"/>
    <lineage>
        <taxon>Bacteria</taxon>
        <taxon>Bacillati</taxon>
        <taxon>Bacillota</taxon>
        <taxon>Bacilli</taxon>
        <taxon>Lactobacillales</taxon>
        <taxon>Lactobacillaceae</taxon>
        <taxon>Lacticaseibacillus</taxon>
    </lineage>
</organism>
<gene>
    <name evidence="1" type="primary">rpsK</name>
    <name type="ordered locus">LSEI_2478</name>
</gene>
<name>RS11_LACP3</name>
<evidence type="ECO:0000255" key="1">
    <source>
        <dbReference type="HAMAP-Rule" id="MF_01310"/>
    </source>
</evidence>
<evidence type="ECO:0000305" key="2"/>
<reference key="1">
    <citation type="journal article" date="2006" name="Proc. Natl. Acad. Sci. U.S.A.">
        <title>Comparative genomics of the lactic acid bacteria.</title>
        <authorList>
            <person name="Makarova K.S."/>
            <person name="Slesarev A."/>
            <person name="Wolf Y.I."/>
            <person name="Sorokin A."/>
            <person name="Mirkin B."/>
            <person name="Koonin E.V."/>
            <person name="Pavlov A."/>
            <person name="Pavlova N."/>
            <person name="Karamychev V."/>
            <person name="Polouchine N."/>
            <person name="Shakhova V."/>
            <person name="Grigoriev I."/>
            <person name="Lou Y."/>
            <person name="Rohksar D."/>
            <person name="Lucas S."/>
            <person name="Huang K."/>
            <person name="Goodstein D.M."/>
            <person name="Hawkins T."/>
            <person name="Plengvidhya V."/>
            <person name="Welker D."/>
            <person name="Hughes J."/>
            <person name="Goh Y."/>
            <person name="Benson A."/>
            <person name="Baldwin K."/>
            <person name="Lee J.-H."/>
            <person name="Diaz-Muniz I."/>
            <person name="Dosti B."/>
            <person name="Smeianov V."/>
            <person name="Wechter W."/>
            <person name="Barabote R."/>
            <person name="Lorca G."/>
            <person name="Altermann E."/>
            <person name="Barrangou R."/>
            <person name="Ganesan B."/>
            <person name="Xie Y."/>
            <person name="Rawsthorne H."/>
            <person name="Tamir D."/>
            <person name="Parker C."/>
            <person name="Breidt F."/>
            <person name="Broadbent J.R."/>
            <person name="Hutkins R."/>
            <person name="O'Sullivan D."/>
            <person name="Steele J."/>
            <person name="Unlu G."/>
            <person name="Saier M.H. Jr."/>
            <person name="Klaenhammer T."/>
            <person name="Richardson P."/>
            <person name="Kozyavkin S."/>
            <person name="Weimer B.C."/>
            <person name="Mills D.A."/>
        </authorList>
    </citation>
    <scope>NUCLEOTIDE SEQUENCE [LARGE SCALE GENOMIC DNA]</scope>
    <source>
        <strain>ATCC 334 / BCRC 17002 / CCUG 31169 / CIP 107868 / KCTC 3260 / NRRL B-441</strain>
    </source>
</reference>
<sequence>MAGRKTTRKRRVRKNVESGVAHIHSTFNNTLVMITDPRGNAIAWSSAGALGFKGSRKSTPFAAQMAAEAAAKESMEHGMKSVEVAVKGPGSGREAAIRSLQATGLEVTAIRDVTPVPHNGSRPPKRRRV</sequence>
<proteinExistence type="inferred from homology"/>